<accession>C5FFE1</accession>
<evidence type="ECO:0000255" key="1">
    <source>
        <dbReference type="HAMAP-Rule" id="MF_03115"/>
    </source>
</evidence>
<reference key="1">
    <citation type="journal article" date="2012" name="MBio">
        <title>Comparative genome analysis of Trichophyton rubrum and related dermatophytes reveals candidate genes involved in infection.</title>
        <authorList>
            <person name="Martinez D.A."/>
            <person name="Oliver B.G."/>
            <person name="Graeser Y."/>
            <person name="Goldberg J.M."/>
            <person name="Li W."/>
            <person name="Martinez-Rossi N.M."/>
            <person name="Monod M."/>
            <person name="Shelest E."/>
            <person name="Barton R.C."/>
            <person name="Birch E."/>
            <person name="Brakhage A.A."/>
            <person name="Chen Z."/>
            <person name="Gurr S.J."/>
            <person name="Heiman D."/>
            <person name="Heitman J."/>
            <person name="Kosti I."/>
            <person name="Rossi A."/>
            <person name="Saif S."/>
            <person name="Samalova M."/>
            <person name="Saunders C.W."/>
            <person name="Shea T."/>
            <person name="Summerbell R.C."/>
            <person name="Xu J."/>
            <person name="Young S."/>
            <person name="Zeng Q."/>
            <person name="Birren B.W."/>
            <person name="Cuomo C.A."/>
            <person name="White T.C."/>
        </authorList>
    </citation>
    <scope>NUCLEOTIDE SEQUENCE [LARGE SCALE GENOMIC DNA]</scope>
    <source>
        <strain>ATCC MYA-4605 / CBS 113480</strain>
    </source>
</reference>
<feature type="chain" id="PRO_0000392394" description="Fe-S cluster assembly protein DRE2">
    <location>
        <begin position="1"/>
        <end position="312"/>
    </location>
</feature>
<feature type="region of interest" description="N-terminal SAM-like domain" evidence="1">
    <location>
        <begin position="7"/>
        <end position="139"/>
    </location>
</feature>
<feature type="region of interest" description="Linker" evidence="1">
    <location>
        <begin position="140"/>
        <end position="204"/>
    </location>
</feature>
<feature type="region of interest" description="Fe-S binding site A" evidence="1">
    <location>
        <begin position="214"/>
        <end position="230"/>
    </location>
</feature>
<feature type="region of interest" description="Fe-S binding site B" evidence="1">
    <location>
        <begin position="275"/>
        <end position="289"/>
    </location>
</feature>
<feature type="short sequence motif" description="Cx2C motif 1" evidence="1">
    <location>
        <begin position="275"/>
        <end position="278"/>
    </location>
</feature>
<feature type="short sequence motif" description="Cx2C motif 2" evidence="1">
    <location>
        <begin position="286"/>
        <end position="289"/>
    </location>
</feature>
<feature type="binding site" evidence="1">
    <location>
        <position position="214"/>
    </location>
    <ligand>
        <name>[2Fe-2S] cluster</name>
        <dbReference type="ChEBI" id="CHEBI:190135"/>
    </ligand>
</feature>
<feature type="binding site" evidence="1">
    <location>
        <position position="225"/>
    </location>
    <ligand>
        <name>[2Fe-2S] cluster</name>
        <dbReference type="ChEBI" id="CHEBI:190135"/>
    </ligand>
</feature>
<feature type="binding site" evidence="1">
    <location>
        <position position="228"/>
    </location>
    <ligand>
        <name>[2Fe-2S] cluster</name>
        <dbReference type="ChEBI" id="CHEBI:190135"/>
    </ligand>
</feature>
<feature type="binding site" evidence="1">
    <location>
        <position position="230"/>
    </location>
    <ligand>
        <name>[2Fe-2S] cluster</name>
        <dbReference type="ChEBI" id="CHEBI:190135"/>
    </ligand>
</feature>
<feature type="binding site" evidence="1">
    <location>
        <position position="275"/>
    </location>
    <ligand>
        <name>[4Fe-4S] cluster</name>
        <dbReference type="ChEBI" id="CHEBI:49883"/>
    </ligand>
</feature>
<feature type="binding site" evidence="1">
    <location>
        <position position="278"/>
    </location>
    <ligand>
        <name>[4Fe-4S] cluster</name>
        <dbReference type="ChEBI" id="CHEBI:49883"/>
    </ligand>
</feature>
<feature type="binding site" evidence="1">
    <location>
        <position position="286"/>
    </location>
    <ligand>
        <name>[4Fe-4S] cluster</name>
        <dbReference type="ChEBI" id="CHEBI:49883"/>
    </ligand>
</feature>
<feature type="binding site" evidence="1">
    <location>
        <position position="289"/>
    </location>
    <ligand>
        <name>[4Fe-4S] cluster</name>
        <dbReference type="ChEBI" id="CHEBI:49883"/>
    </ligand>
</feature>
<sequence>MSPAAILSDVPRVLLLSPPSLSSNPDKLAELLNQYDKNTRDLQMIDRLAAGLVSLPESTYNLVLLLTDIDGTSTESERLVGRDVLQQIARTLQPGGIMKYHDGLSAMIKEPARTEAILSGLIANDKGELVKPVFEEQSVLLPFSINRSQKSIKGININKSDQQPAILQKNIVTLTNNTNDIFNGLEGDDDELIDEDELINEDELERPIIQPPECRPKAGKRRRACKDCTCGLAQKLEAEDKRQRANADEKLSALKLNSGEIAEVDFTIQGKTGSCGNCSLGDAFRCDGCPYIGLPPFKPGEEVKLFDNDVQL</sequence>
<proteinExistence type="inferred from homology"/>
<comment type="function">
    <text evidence="1">Component of the cytosolic iron-sulfur (Fe-S) protein assembly (CIA) machinery required for the maturation of extramitochondrial Fe-S proteins. Part of an electron transfer chain functioning in an early step of cytosolic Fe-S biogenesis, facilitating the de novo assembly of a [4Fe-4S] cluster on the scaffold complex CFD1-NBP35. Electrons are transferred to DRE2 from NADPH via the FAD- and FMN-containing protein TAH18. TAH18-DRE2 are also required for the assembly of the diferric tyrosyl radical cofactor of ribonucleotide reductase (RNR), probably by providing electrons for reduction during radical cofactor maturation in the catalytic small subunit RNR2.</text>
</comment>
<comment type="cofactor">
    <cofactor evidence="1">
        <name>[2Fe-2S] cluster</name>
        <dbReference type="ChEBI" id="CHEBI:190135"/>
    </cofactor>
</comment>
<comment type="cofactor">
    <cofactor evidence="1">
        <name>[4Fe-4S] cluster</name>
        <dbReference type="ChEBI" id="CHEBI:49883"/>
    </cofactor>
</comment>
<comment type="subunit">
    <text evidence="1">Monomer. Interacts with TAH18. Interacts with MIA40.</text>
</comment>
<comment type="subcellular location">
    <subcellularLocation>
        <location evidence="1">Cytoplasm</location>
    </subcellularLocation>
    <subcellularLocation>
        <location evidence="1">Mitochondrion intermembrane space</location>
    </subcellularLocation>
</comment>
<comment type="domain">
    <text evidence="1">The C-terminal domain binds 2 Fe-S clusters but is otherwise mostly in an intrinsically disordered conformation.</text>
</comment>
<comment type="domain">
    <text evidence="1">The N-terminal domain has structural similarity with S-adenosyl-L-methionine-dependent methyltransferases, but does not bind S-adenosyl-L-methionine. It is required for correct assembly of the 2 Fe-S clusters.</text>
</comment>
<comment type="domain">
    <text evidence="1">The twin Cx2C motifs are involved in the recognition by the mitochondrial MIA40-ERV1 disulfide relay system. The formation of 2 disulfide bonds in the Cx2C motifs through dithiol/disulfide exchange reactions effectively traps the protein in the mitochondrial intermembrane space.</text>
</comment>
<comment type="similarity">
    <text evidence="1">Belongs to the anamorsin family.</text>
</comment>
<protein>
    <recommendedName>
        <fullName evidence="1">Fe-S cluster assembly protein DRE2</fullName>
    </recommendedName>
    <alternativeName>
        <fullName evidence="1">Anamorsin homolog</fullName>
    </alternativeName>
</protein>
<gene>
    <name evidence="1" type="primary">DRE2</name>
    <name type="ORF">MCYG_01413</name>
</gene>
<name>DRE2_ARTOC</name>
<dbReference type="EMBL" id="DS995701">
    <property type="protein sequence ID" value="EEQ28525.1"/>
    <property type="molecule type" value="Genomic_DNA"/>
</dbReference>
<dbReference type="RefSeq" id="XP_002851309.1">
    <property type="nucleotide sequence ID" value="XM_002851263.1"/>
</dbReference>
<dbReference type="SMR" id="C5FFE1"/>
<dbReference type="STRING" id="554155.C5FFE1"/>
<dbReference type="GeneID" id="9228930"/>
<dbReference type="VEuPathDB" id="FungiDB:MCYG_01413"/>
<dbReference type="eggNOG" id="KOG4020">
    <property type="taxonomic scope" value="Eukaryota"/>
</dbReference>
<dbReference type="HOGENOM" id="CLU_067152_1_0_1"/>
<dbReference type="OMA" id="DFVMPVT"/>
<dbReference type="OrthoDB" id="311633at2759"/>
<dbReference type="Proteomes" id="UP000002035">
    <property type="component" value="Unassembled WGS sequence"/>
</dbReference>
<dbReference type="GO" id="GO:0005758">
    <property type="term" value="C:mitochondrial intermembrane space"/>
    <property type="evidence" value="ECO:0007669"/>
    <property type="project" value="UniProtKB-SubCell"/>
</dbReference>
<dbReference type="GO" id="GO:0051537">
    <property type="term" value="F:2 iron, 2 sulfur cluster binding"/>
    <property type="evidence" value="ECO:0007669"/>
    <property type="project" value="UniProtKB-UniRule"/>
</dbReference>
<dbReference type="GO" id="GO:0051539">
    <property type="term" value="F:4 iron, 4 sulfur cluster binding"/>
    <property type="evidence" value="ECO:0007669"/>
    <property type="project" value="UniProtKB-KW"/>
</dbReference>
<dbReference type="GO" id="GO:0009055">
    <property type="term" value="F:electron transfer activity"/>
    <property type="evidence" value="ECO:0007669"/>
    <property type="project" value="UniProtKB-UniRule"/>
</dbReference>
<dbReference type="GO" id="GO:0046872">
    <property type="term" value="F:metal ion binding"/>
    <property type="evidence" value="ECO:0007669"/>
    <property type="project" value="UniProtKB-KW"/>
</dbReference>
<dbReference type="GO" id="GO:0016226">
    <property type="term" value="P:iron-sulfur cluster assembly"/>
    <property type="evidence" value="ECO:0007669"/>
    <property type="project" value="UniProtKB-UniRule"/>
</dbReference>
<dbReference type="Gene3D" id="3.40.50.11000">
    <property type="entry name" value="Fe-S cluster assembly protein Dre2, N-terminal domain"/>
    <property type="match status" value="1"/>
</dbReference>
<dbReference type="HAMAP" id="MF_03115">
    <property type="entry name" value="Anamorsin"/>
    <property type="match status" value="1"/>
</dbReference>
<dbReference type="InterPro" id="IPR007785">
    <property type="entry name" value="Anamorsin"/>
</dbReference>
<dbReference type="InterPro" id="IPR046408">
    <property type="entry name" value="CIAPIN1"/>
</dbReference>
<dbReference type="InterPro" id="IPR031838">
    <property type="entry name" value="Dre2_N"/>
</dbReference>
<dbReference type="PANTHER" id="PTHR13273">
    <property type="entry name" value="ANAMORSIN"/>
    <property type="match status" value="1"/>
</dbReference>
<dbReference type="PANTHER" id="PTHR13273:SF14">
    <property type="entry name" value="ANAMORSIN"/>
    <property type="match status" value="1"/>
</dbReference>
<dbReference type="Pfam" id="PF05093">
    <property type="entry name" value="CIAPIN1"/>
    <property type="match status" value="1"/>
</dbReference>
<dbReference type="Pfam" id="PF16803">
    <property type="entry name" value="DRE2_N"/>
    <property type="match status" value="1"/>
</dbReference>
<keyword id="KW-0001">2Fe-2S</keyword>
<keyword id="KW-0004">4Fe-4S</keyword>
<keyword id="KW-0963">Cytoplasm</keyword>
<keyword id="KW-0408">Iron</keyword>
<keyword id="KW-0411">Iron-sulfur</keyword>
<keyword id="KW-0479">Metal-binding</keyword>
<keyword id="KW-0496">Mitochondrion</keyword>
<keyword id="KW-1185">Reference proteome</keyword>
<organism>
    <name type="scientific">Arthroderma otae (strain ATCC MYA-4605 / CBS 113480)</name>
    <name type="common">Microsporum canis</name>
    <dbReference type="NCBI Taxonomy" id="554155"/>
    <lineage>
        <taxon>Eukaryota</taxon>
        <taxon>Fungi</taxon>
        <taxon>Dikarya</taxon>
        <taxon>Ascomycota</taxon>
        <taxon>Pezizomycotina</taxon>
        <taxon>Eurotiomycetes</taxon>
        <taxon>Eurotiomycetidae</taxon>
        <taxon>Onygenales</taxon>
        <taxon>Arthrodermataceae</taxon>
        <taxon>Microsporum</taxon>
    </lineage>
</organism>